<gene>
    <name type="primary">PERK5</name>
    <name type="ordered locus">At4g34440</name>
    <name type="ORF">T4L20.20</name>
</gene>
<sequence length="670" mass="70902">MADSPVDSSPAPETSNGTPPSNGTSPSNESSPPTPPSSPPPSSISAPPPDISASFSPPPAPPTQETSPPTSPSSSPPVVANPSPQTPENPSPPAPEGSTPVTPPAPPQTPSNQSPERPTPPSPGANDDRNRTNGGNNNRDGSTPSPPSSGNRTSGDGGSPSPPRSISPPQNSGDSDSSSGNHPQANIGLIIGVLVGAGLLLLLAVCICICCNRKKKKKSPQVNHMHYYNNNPYGGAPSGNGGYYKGTPQDHVVNMAGQGGGNWGPQQPVSGPHSDASNLTGRTAIPSPQAATLGHNQSTFTYDELSIATEGFAQSNLLGQGGFGYVHKGVLPSGKEVAVKSLKLGSGQGEREFQAEVDIISRVHHRHLVSLVGYCISGGQRLLVYEFIPNNTLEFHLHGKGRPVLDWPTRVKIALGSARGLAYLHEDCHPRIIHRDIKAANILLDFSFETKVADFGLAKLSQDNYTHVSTRVMGTFGYLAPEYASSGKLSDKSDVFSFGVMLLELITGRPPLDLTGEMEDSLVDWARPLCLKAAQDGDYNQLADPRLELNYSHQEMVQMASCAAAAIRHSARRRPKMSQIVRALEGDMSMDDLSEGTRPGQSTYLSPGSVSSEYDASSYTADMKKFKKLALENKEYQSSEYGGTSEYGLNPSASSSEEMNRGSMKRNPQL</sequence>
<proteinExistence type="evidence at transcript level"/>
<organism>
    <name type="scientific">Arabidopsis thaliana</name>
    <name type="common">Mouse-ear cress</name>
    <dbReference type="NCBI Taxonomy" id="3702"/>
    <lineage>
        <taxon>Eukaryota</taxon>
        <taxon>Viridiplantae</taxon>
        <taxon>Streptophyta</taxon>
        <taxon>Embryophyta</taxon>
        <taxon>Tracheophyta</taxon>
        <taxon>Spermatophyta</taxon>
        <taxon>Magnoliopsida</taxon>
        <taxon>eudicotyledons</taxon>
        <taxon>Gunneridae</taxon>
        <taxon>Pentapetalae</taxon>
        <taxon>rosids</taxon>
        <taxon>malvids</taxon>
        <taxon>Brassicales</taxon>
        <taxon>Brassicaceae</taxon>
        <taxon>Camelineae</taxon>
        <taxon>Arabidopsis</taxon>
    </lineage>
</organism>
<evidence type="ECO:0000250" key="1"/>
<evidence type="ECO:0000250" key="2">
    <source>
        <dbReference type="UniProtKB" id="O48814"/>
    </source>
</evidence>
<evidence type="ECO:0000255" key="3"/>
<evidence type="ECO:0000255" key="4">
    <source>
        <dbReference type="PROSITE-ProRule" id="PRU00159"/>
    </source>
</evidence>
<evidence type="ECO:0000255" key="5">
    <source>
        <dbReference type="PROSITE-ProRule" id="PRU10027"/>
    </source>
</evidence>
<evidence type="ECO:0000256" key="6">
    <source>
        <dbReference type="SAM" id="MobiDB-lite"/>
    </source>
</evidence>
<evidence type="ECO:0000269" key="7">
    <source>
    </source>
</evidence>
<evidence type="ECO:0000305" key="8"/>
<name>PERK5_ARATH</name>
<comment type="catalytic activity">
    <reaction>
        <text>L-seryl-[protein] + ATP = O-phospho-L-seryl-[protein] + ADP + H(+)</text>
        <dbReference type="Rhea" id="RHEA:17989"/>
        <dbReference type="Rhea" id="RHEA-COMP:9863"/>
        <dbReference type="Rhea" id="RHEA-COMP:11604"/>
        <dbReference type="ChEBI" id="CHEBI:15378"/>
        <dbReference type="ChEBI" id="CHEBI:29999"/>
        <dbReference type="ChEBI" id="CHEBI:30616"/>
        <dbReference type="ChEBI" id="CHEBI:83421"/>
        <dbReference type="ChEBI" id="CHEBI:456216"/>
        <dbReference type="EC" id="2.7.11.1"/>
    </reaction>
</comment>
<comment type="catalytic activity">
    <reaction>
        <text>L-threonyl-[protein] + ATP = O-phospho-L-threonyl-[protein] + ADP + H(+)</text>
        <dbReference type="Rhea" id="RHEA:46608"/>
        <dbReference type="Rhea" id="RHEA-COMP:11060"/>
        <dbReference type="Rhea" id="RHEA-COMP:11605"/>
        <dbReference type="ChEBI" id="CHEBI:15378"/>
        <dbReference type="ChEBI" id="CHEBI:30013"/>
        <dbReference type="ChEBI" id="CHEBI:30616"/>
        <dbReference type="ChEBI" id="CHEBI:61977"/>
        <dbReference type="ChEBI" id="CHEBI:456216"/>
        <dbReference type="EC" id="2.7.11.1"/>
    </reaction>
</comment>
<comment type="subcellular location">
    <subcellularLocation>
        <location evidence="1">Cell membrane</location>
        <topology evidence="1">Single-pass membrane protein</topology>
    </subcellularLocation>
</comment>
<comment type="tissue specificity">
    <text evidence="7">Mostly expressed in flower buds.</text>
</comment>
<comment type="similarity">
    <text evidence="4">Belongs to the protein kinase superfamily. Ser/Thr protein kinase family.</text>
</comment>
<comment type="sequence caution" evidence="8">
    <conflict type="erroneous gene model prediction">
        <sequence resource="EMBL-CDS" id="CAA18823"/>
    </conflict>
</comment>
<comment type="sequence caution" evidence="8">
    <conflict type="erroneous gene model prediction">
        <sequence resource="EMBL-CDS" id="CAB80161"/>
    </conflict>
</comment>
<protein>
    <recommendedName>
        <fullName>Proline-rich receptor-like protein kinase PERK5</fullName>
        <ecNumber>2.7.11.1</ecNumber>
    </recommendedName>
    <alternativeName>
        <fullName>Proline-rich extensin-like receptor kinase 5</fullName>
        <shortName>AtPERK5</shortName>
    </alternativeName>
</protein>
<reference key="1">
    <citation type="journal article" date="1999" name="Nature">
        <title>Sequence and analysis of chromosome 4 of the plant Arabidopsis thaliana.</title>
        <authorList>
            <person name="Mayer K.F.X."/>
            <person name="Schueller C."/>
            <person name="Wambutt R."/>
            <person name="Murphy G."/>
            <person name="Volckaert G."/>
            <person name="Pohl T."/>
            <person name="Duesterhoeft A."/>
            <person name="Stiekema W."/>
            <person name="Entian K.-D."/>
            <person name="Terryn N."/>
            <person name="Harris B."/>
            <person name="Ansorge W."/>
            <person name="Brandt P."/>
            <person name="Grivell L.A."/>
            <person name="Rieger M."/>
            <person name="Weichselgartner M."/>
            <person name="de Simone V."/>
            <person name="Obermaier B."/>
            <person name="Mache R."/>
            <person name="Mueller M."/>
            <person name="Kreis M."/>
            <person name="Delseny M."/>
            <person name="Puigdomenech P."/>
            <person name="Watson M."/>
            <person name="Schmidtheini T."/>
            <person name="Reichert B."/>
            <person name="Portetelle D."/>
            <person name="Perez-Alonso M."/>
            <person name="Boutry M."/>
            <person name="Bancroft I."/>
            <person name="Vos P."/>
            <person name="Hoheisel J."/>
            <person name="Zimmermann W."/>
            <person name="Wedler H."/>
            <person name="Ridley P."/>
            <person name="Langham S.-A."/>
            <person name="McCullagh B."/>
            <person name="Bilham L."/>
            <person name="Robben J."/>
            <person name="van der Schueren J."/>
            <person name="Grymonprez B."/>
            <person name="Chuang Y.-J."/>
            <person name="Vandenbussche F."/>
            <person name="Braeken M."/>
            <person name="Weltjens I."/>
            <person name="Voet M."/>
            <person name="Bastiaens I."/>
            <person name="Aert R."/>
            <person name="Defoor E."/>
            <person name="Weitzenegger T."/>
            <person name="Bothe G."/>
            <person name="Ramsperger U."/>
            <person name="Hilbert H."/>
            <person name="Braun M."/>
            <person name="Holzer E."/>
            <person name="Brandt A."/>
            <person name="Peters S."/>
            <person name="van Staveren M."/>
            <person name="Dirkse W."/>
            <person name="Mooijman P."/>
            <person name="Klein Lankhorst R."/>
            <person name="Rose M."/>
            <person name="Hauf J."/>
            <person name="Koetter P."/>
            <person name="Berneiser S."/>
            <person name="Hempel S."/>
            <person name="Feldpausch M."/>
            <person name="Lamberth S."/>
            <person name="Van den Daele H."/>
            <person name="De Keyser A."/>
            <person name="Buysshaert C."/>
            <person name="Gielen J."/>
            <person name="Villarroel R."/>
            <person name="De Clercq R."/>
            <person name="van Montagu M."/>
            <person name="Rogers J."/>
            <person name="Cronin A."/>
            <person name="Quail M.A."/>
            <person name="Bray-Allen S."/>
            <person name="Clark L."/>
            <person name="Doggett J."/>
            <person name="Hall S."/>
            <person name="Kay M."/>
            <person name="Lennard N."/>
            <person name="McLay K."/>
            <person name="Mayes R."/>
            <person name="Pettett A."/>
            <person name="Rajandream M.A."/>
            <person name="Lyne M."/>
            <person name="Benes V."/>
            <person name="Rechmann S."/>
            <person name="Borkova D."/>
            <person name="Bloecker H."/>
            <person name="Scharfe M."/>
            <person name="Grimm M."/>
            <person name="Loehnert T.-H."/>
            <person name="Dose S."/>
            <person name="de Haan M."/>
            <person name="Maarse A.C."/>
            <person name="Schaefer M."/>
            <person name="Mueller-Auer S."/>
            <person name="Gabel C."/>
            <person name="Fuchs M."/>
            <person name="Fartmann B."/>
            <person name="Granderath K."/>
            <person name="Dauner D."/>
            <person name="Herzl A."/>
            <person name="Neumann S."/>
            <person name="Argiriou A."/>
            <person name="Vitale D."/>
            <person name="Liguori R."/>
            <person name="Piravandi E."/>
            <person name="Massenet O."/>
            <person name="Quigley F."/>
            <person name="Clabauld G."/>
            <person name="Muendlein A."/>
            <person name="Felber R."/>
            <person name="Schnabl S."/>
            <person name="Hiller R."/>
            <person name="Schmidt W."/>
            <person name="Lecharny A."/>
            <person name="Aubourg S."/>
            <person name="Chefdor F."/>
            <person name="Cooke R."/>
            <person name="Berger C."/>
            <person name="Monfort A."/>
            <person name="Casacuberta E."/>
            <person name="Gibbons T."/>
            <person name="Weber N."/>
            <person name="Vandenbol M."/>
            <person name="Bargues M."/>
            <person name="Terol J."/>
            <person name="Torres A."/>
            <person name="Perez-Perez A."/>
            <person name="Purnelle B."/>
            <person name="Bent E."/>
            <person name="Johnson S."/>
            <person name="Tacon D."/>
            <person name="Jesse T."/>
            <person name="Heijnen L."/>
            <person name="Schwarz S."/>
            <person name="Scholler P."/>
            <person name="Heber S."/>
            <person name="Francs P."/>
            <person name="Bielke C."/>
            <person name="Frishman D."/>
            <person name="Haase D."/>
            <person name="Lemcke K."/>
            <person name="Mewes H.-W."/>
            <person name="Stocker S."/>
            <person name="Zaccaria P."/>
            <person name="Bevan M."/>
            <person name="Wilson R.K."/>
            <person name="de la Bastide M."/>
            <person name="Habermann K."/>
            <person name="Parnell L."/>
            <person name="Dedhia N."/>
            <person name="Gnoj L."/>
            <person name="Schutz K."/>
            <person name="Huang E."/>
            <person name="Spiegel L."/>
            <person name="Sekhon M."/>
            <person name="Murray J."/>
            <person name="Sheet P."/>
            <person name="Cordes M."/>
            <person name="Abu-Threideh J."/>
            <person name="Stoneking T."/>
            <person name="Kalicki J."/>
            <person name="Graves T."/>
            <person name="Harmon G."/>
            <person name="Edwards J."/>
            <person name="Latreille P."/>
            <person name="Courtney L."/>
            <person name="Cloud J."/>
            <person name="Abbott A."/>
            <person name="Scott K."/>
            <person name="Johnson D."/>
            <person name="Minx P."/>
            <person name="Bentley D."/>
            <person name="Fulton B."/>
            <person name="Miller N."/>
            <person name="Greco T."/>
            <person name="Kemp K."/>
            <person name="Kramer J."/>
            <person name="Fulton L."/>
            <person name="Mardis E."/>
            <person name="Dante M."/>
            <person name="Pepin K."/>
            <person name="Hillier L.W."/>
            <person name="Nelson J."/>
            <person name="Spieth J."/>
            <person name="Ryan E."/>
            <person name="Andrews S."/>
            <person name="Geisel C."/>
            <person name="Layman D."/>
            <person name="Du H."/>
            <person name="Ali J."/>
            <person name="Berghoff A."/>
            <person name="Jones K."/>
            <person name="Drone K."/>
            <person name="Cotton M."/>
            <person name="Joshu C."/>
            <person name="Antonoiu B."/>
            <person name="Zidanic M."/>
            <person name="Strong C."/>
            <person name="Sun H."/>
            <person name="Lamar B."/>
            <person name="Yordan C."/>
            <person name="Ma P."/>
            <person name="Zhong J."/>
            <person name="Preston R."/>
            <person name="Vil D."/>
            <person name="Shekher M."/>
            <person name="Matero A."/>
            <person name="Shah R."/>
            <person name="Swaby I.K."/>
            <person name="O'Shaughnessy A."/>
            <person name="Rodriguez M."/>
            <person name="Hoffman J."/>
            <person name="Till S."/>
            <person name="Granat S."/>
            <person name="Shohdy N."/>
            <person name="Hasegawa A."/>
            <person name="Hameed A."/>
            <person name="Lodhi M."/>
            <person name="Johnson A."/>
            <person name="Chen E."/>
            <person name="Marra M.A."/>
            <person name="Martienssen R."/>
            <person name="McCombie W.R."/>
        </authorList>
    </citation>
    <scope>NUCLEOTIDE SEQUENCE [LARGE SCALE GENOMIC DNA]</scope>
    <source>
        <strain>cv. Columbia</strain>
    </source>
</reference>
<reference key="2">
    <citation type="journal article" date="2017" name="Plant J.">
        <title>Araport11: a complete reannotation of the Arabidopsis thaliana reference genome.</title>
        <authorList>
            <person name="Cheng C.Y."/>
            <person name="Krishnakumar V."/>
            <person name="Chan A.P."/>
            <person name="Thibaud-Nissen F."/>
            <person name="Schobel S."/>
            <person name="Town C.D."/>
        </authorList>
    </citation>
    <scope>GENOME REANNOTATION</scope>
    <source>
        <strain>cv. Columbia</strain>
    </source>
</reference>
<reference key="3">
    <citation type="journal article" date="2002" name="Science">
        <title>Functional annotation of a full-length Arabidopsis cDNA collection.</title>
        <authorList>
            <person name="Seki M."/>
            <person name="Narusaka M."/>
            <person name="Kamiya A."/>
            <person name="Ishida J."/>
            <person name="Satou M."/>
            <person name="Sakurai T."/>
            <person name="Nakajima M."/>
            <person name="Enju A."/>
            <person name="Akiyama K."/>
            <person name="Oono Y."/>
            <person name="Muramatsu M."/>
            <person name="Hayashizaki Y."/>
            <person name="Kawai J."/>
            <person name="Carninci P."/>
            <person name="Itoh M."/>
            <person name="Ishii Y."/>
            <person name="Arakawa T."/>
            <person name="Shibata K."/>
            <person name="Shinagawa A."/>
            <person name="Shinozaki K."/>
        </authorList>
    </citation>
    <scope>NUCLEOTIDE SEQUENCE [LARGE SCALE MRNA]</scope>
    <source>
        <strain>cv. Columbia</strain>
    </source>
</reference>
<reference key="4">
    <citation type="journal article" date="2003" name="Science">
        <title>Empirical analysis of transcriptional activity in the Arabidopsis genome.</title>
        <authorList>
            <person name="Yamada K."/>
            <person name="Lim J."/>
            <person name="Dale J.M."/>
            <person name="Chen H."/>
            <person name="Shinn P."/>
            <person name="Palm C.J."/>
            <person name="Southwick A.M."/>
            <person name="Wu H.C."/>
            <person name="Kim C.J."/>
            <person name="Nguyen M."/>
            <person name="Pham P.K."/>
            <person name="Cheuk R.F."/>
            <person name="Karlin-Newmann G."/>
            <person name="Liu S.X."/>
            <person name="Lam B."/>
            <person name="Sakano H."/>
            <person name="Wu T."/>
            <person name="Yu G."/>
            <person name="Miranda M."/>
            <person name="Quach H.L."/>
            <person name="Tripp M."/>
            <person name="Chang C.H."/>
            <person name="Lee J.M."/>
            <person name="Toriumi M.J."/>
            <person name="Chan M.M."/>
            <person name="Tang C.C."/>
            <person name="Onodera C.S."/>
            <person name="Deng J.M."/>
            <person name="Akiyama K."/>
            <person name="Ansari Y."/>
            <person name="Arakawa T."/>
            <person name="Banh J."/>
            <person name="Banno F."/>
            <person name="Bowser L."/>
            <person name="Brooks S.Y."/>
            <person name="Carninci P."/>
            <person name="Chao Q."/>
            <person name="Choy N."/>
            <person name="Enju A."/>
            <person name="Goldsmith A.D."/>
            <person name="Gurjal M."/>
            <person name="Hansen N.F."/>
            <person name="Hayashizaki Y."/>
            <person name="Johnson-Hopson C."/>
            <person name="Hsuan V.W."/>
            <person name="Iida K."/>
            <person name="Karnes M."/>
            <person name="Khan S."/>
            <person name="Koesema E."/>
            <person name="Ishida J."/>
            <person name="Jiang P.X."/>
            <person name="Jones T."/>
            <person name="Kawai J."/>
            <person name="Kamiya A."/>
            <person name="Meyers C."/>
            <person name="Nakajima M."/>
            <person name="Narusaka M."/>
            <person name="Seki M."/>
            <person name="Sakurai T."/>
            <person name="Satou M."/>
            <person name="Tamse R."/>
            <person name="Vaysberg M."/>
            <person name="Wallender E.K."/>
            <person name="Wong C."/>
            <person name="Yamamura Y."/>
            <person name="Yuan S."/>
            <person name="Shinozaki K."/>
            <person name="Davis R.W."/>
            <person name="Theologis A."/>
            <person name="Ecker J.R."/>
        </authorList>
    </citation>
    <scope>NUCLEOTIDE SEQUENCE [LARGE SCALE MRNA]</scope>
    <source>
        <strain>cv. Columbia</strain>
    </source>
</reference>
<reference key="5">
    <citation type="journal article" date="2002" name="Plant Mol. Biol.">
        <title>The proline-rich, extensin-like receptor kinase-1 (PERK1) gene is rapidly induced by wounding.</title>
        <authorList>
            <person name="Silva N.F."/>
            <person name="Goring D.R."/>
        </authorList>
    </citation>
    <scope>GENE FAMILY</scope>
</reference>
<reference key="6">
    <citation type="journal article" date="2004" name="Plant Cell Physiol.">
        <title>A comprehensive expression analysis of the Arabidopsis proline-rich extensin-like receptor kinase gene family using bioinformatic and experimental approaches.</title>
        <authorList>
            <person name="Nakhamchik A."/>
            <person name="Zhao Z."/>
            <person name="Provart N.J."/>
            <person name="Shiu S.-H."/>
            <person name="Keatley S.K."/>
            <person name="Cameron R.K."/>
            <person name="Goring D.R."/>
        </authorList>
    </citation>
    <scope>TISSUE SPECIFICITY</scope>
    <scope>GENE FAMILY</scope>
    <scope>NOMENCLATURE</scope>
</reference>
<dbReference type="EC" id="2.7.11.1"/>
<dbReference type="EMBL" id="AL023094">
    <property type="protein sequence ID" value="CAA18823.1"/>
    <property type="status" value="ALT_SEQ"/>
    <property type="molecule type" value="Genomic_DNA"/>
</dbReference>
<dbReference type="EMBL" id="AL161585">
    <property type="protein sequence ID" value="CAB80161.1"/>
    <property type="status" value="ALT_SEQ"/>
    <property type="molecule type" value="Genomic_DNA"/>
</dbReference>
<dbReference type="EMBL" id="CP002687">
    <property type="protein sequence ID" value="AEE86377.1"/>
    <property type="molecule type" value="Genomic_DNA"/>
</dbReference>
<dbReference type="EMBL" id="CP002687">
    <property type="protein sequence ID" value="ANM66357.1"/>
    <property type="molecule type" value="Genomic_DNA"/>
</dbReference>
<dbReference type="EMBL" id="AK118488">
    <property type="protein sequence ID" value="BAC43092.1"/>
    <property type="molecule type" value="mRNA"/>
</dbReference>
<dbReference type="EMBL" id="BT005955">
    <property type="protein sequence ID" value="AAO64890.1"/>
    <property type="molecule type" value="mRNA"/>
</dbReference>
<dbReference type="PIR" id="T05264">
    <property type="entry name" value="T05264"/>
</dbReference>
<dbReference type="RefSeq" id="NP_001320136.1">
    <property type="nucleotide sequence ID" value="NM_001342284.1"/>
</dbReference>
<dbReference type="RefSeq" id="NP_195170.2">
    <property type="nucleotide sequence ID" value="NM_119609.3"/>
</dbReference>
<dbReference type="SMR" id="Q8GX23"/>
<dbReference type="BioGRID" id="14877">
    <property type="interactions" value="22"/>
</dbReference>
<dbReference type="IntAct" id="Q8GX23">
    <property type="interactions" value="21"/>
</dbReference>
<dbReference type="STRING" id="3702.Q8GX23"/>
<dbReference type="GlyCosmos" id="Q8GX23">
    <property type="glycosylation" value="4 sites, No reported glycans"/>
</dbReference>
<dbReference type="GlyGen" id="Q8GX23">
    <property type="glycosylation" value="8 sites"/>
</dbReference>
<dbReference type="PaxDb" id="3702-AT4G34440.1"/>
<dbReference type="ProteomicsDB" id="236770"/>
<dbReference type="EnsemblPlants" id="AT4G34440.1">
    <property type="protein sequence ID" value="AT4G34440.1"/>
    <property type="gene ID" value="AT4G34440"/>
</dbReference>
<dbReference type="EnsemblPlants" id="AT4G34440.2">
    <property type="protein sequence ID" value="AT4G34440.2"/>
    <property type="gene ID" value="AT4G34440"/>
</dbReference>
<dbReference type="GeneID" id="829595"/>
<dbReference type="Gramene" id="AT4G34440.1">
    <property type="protein sequence ID" value="AT4G34440.1"/>
    <property type="gene ID" value="AT4G34440"/>
</dbReference>
<dbReference type="Gramene" id="AT4G34440.2">
    <property type="protein sequence ID" value="AT4G34440.2"/>
    <property type="gene ID" value="AT4G34440"/>
</dbReference>
<dbReference type="KEGG" id="ath:AT4G34440"/>
<dbReference type="Araport" id="AT4G34440"/>
<dbReference type="TAIR" id="AT4G34440">
    <property type="gene designation" value="PERK5"/>
</dbReference>
<dbReference type="eggNOG" id="KOG1187">
    <property type="taxonomic scope" value="Eukaryota"/>
</dbReference>
<dbReference type="HOGENOM" id="CLU_000288_106_6_1"/>
<dbReference type="InParanoid" id="Q8GX23"/>
<dbReference type="OMA" id="GNWGPQQ"/>
<dbReference type="OrthoDB" id="4062651at2759"/>
<dbReference type="PhylomeDB" id="Q8GX23"/>
<dbReference type="PRO" id="PR:Q8GX23"/>
<dbReference type="Proteomes" id="UP000006548">
    <property type="component" value="Chromosome 4"/>
</dbReference>
<dbReference type="ExpressionAtlas" id="Q8GX23">
    <property type="expression patterns" value="baseline and differential"/>
</dbReference>
<dbReference type="GO" id="GO:0005886">
    <property type="term" value="C:plasma membrane"/>
    <property type="evidence" value="ECO:0007669"/>
    <property type="project" value="UniProtKB-SubCell"/>
</dbReference>
<dbReference type="GO" id="GO:0005524">
    <property type="term" value="F:ATP binding"/>
    <property type="evidence" value="ECO:0007669"/>
    <property type="project" value="UniProtKB-KW"/>
</dbReference>
<dbReference type="GO" id="GO:0106310">
    <property type="term" value="F:protein serine kinase activity"/>
    <property type="evidence" value="ECO:0007669"/>
    <property type="project" value="RHEA"/>
</dbReference>
<dbReference type="GO" id="GO:0004674">
    <property type="term" value="F:protein serine/threonine kinase activity"/>
    <property type="evidence" value="ECO:0007005"/>
    <property type="project" value="TAIR"/>
</dbReference>
<dbReference type="GO" id="GO:0046777">
    <property type="term" value="P:protein autophosphorylation"/>
    <property type="evidence" value="ECO:0007005"/>
    <property type="project" value="TAIR"/>
</dbReference>
<dbReference type="FunFam" id="1.10.510.10:FF:000239">
    <property type="entry name" value="Proline-rich receptor-like protein kinase PERK1"/>
    <property type="match status" value="1"/>
</dbReference>
<dbReference type="FunFam" id="3.30.200.20:FF:000207">
    <property type="entry name" value="proline-rich receptor-like protein kinase PERK1"/>
    <property type="match status" value="1"/>
</dbReference>
<dbReference type="Gene3D" id="3.30.200.20">
    <property type="entry name" value="Phosphorylase Kinase, domain 1"/>
    <property type="match status" value="1"/>
</dbReference>
<dbReference type="Gene3D" id="1.10.510.10">
    <property type="entry name" value="Transferase(Phosphotransferase) domain 1"/>
    <property type="match status" value="1"/>
</dbReference>
<dbReference type="InterPro" id="IPR011009">
    <property type="entry name" value="Kinase-like_dom_sf"/>
</dbReference>
<dbReference type="InterPro" id="IPR047117">
    <property type="entry name" value="PERK1-13-like"/>
</dbReference>
<dbReference type="InterPro" id="IPR000719">
    <property type="entry name" value="Prot_kinase_dom"/>
</dbReference>
<dbReference type="InterPro" id="IPR017441">
    <property type="entry name" value="Protein_kinase_ATP_BS"/>
</dbReference>
<dbReference type="InterPro" id="IPR001245">
    <property type="entry name" value="Ser-Thr/Tyr_kinase_cat_dom"/>
</dbReference>
<dbReference type="InterPro" id="IPR008271">
    <property type="entry name" value="Ser/Thr_kinase_AS"/>
</dbReference>
<dbReference type="PANTHER" id="PTHR47982">
    <property type="entry name" value="PROLINE-RICH RECEPTOR-LIKE PROTEIN KINASE PERK4"/>
    <property type="match status" value="1"/>
</dbReference>
<dbReference type="PANTHER" id="PTHR47982:SF71">
    <property type="entry name" value="PROLINE-RICH RECEPTOR-LIKE PROTEIN KINASE PERK5"/>
    <property type="match status" value="1"/>
</dbReference>
<dbReference type="Pfam" id="PF07714">
    <property type="entry name" value="PK_Tyr_Ser-Thr"/>
    <property type="match status" value="1"/>
</dbReference>
<dbReference type="SMART" id="SM00220">
    <property type="entry name" value="S_TKc"/>
    <property type="match status" value="1"/>
</dbReference>
<dbReference type="SUPFAM" id="SSF56112">
    <property type="entry name" value="Protein kinase-like (PK-like)"/>
    <property type="match status" value="1"/>
</dbReference>
<dbReference type="PROSITE" id="PS00107">
    <property type="entry name" value="PROTEIN_KINASE_ATP"/>
    <property type="match status" value="1"/>
</dbReference>
<dbReference type="PROSITE" id="PS50011">
    <property type="entry name" value="PROTEIN_KINASE_DOM"/>
    <property type="match status" value="1"/>
</dbReference>
<dbReference type="PROSITE" id="PS00108">
    <property type="entry name" value="PROTEIN_KINASE_ST"/>
    <property type="match status" value="1"/>
</dbReference>
<feature type="chain" id="PRO_0000400057" description="Proline-rich receptor-like protein kinase PERK5">
    <location>
        <begin position="1"/>
        <end position="670"/>
    </location>
</feature>
<feature type="topological domain" description="Extracellular" evidence="3">
    <location>
        <begin position="1"/>
        <end position="186"/>
    </location>
</feature>
<feature type="transmembrane region" description="Helical" evidence="3">
    <location>
        <begin position="187"/>
        <end position="207"/>
    </location>
</feature>
<feature type="topological domain" description="Cytoplasmic" evidence="3">
    <location>
        <begin position="208"/>
        <end position="670"/>
    </location>
</feature>
<feature type="domain" description="Protein kinase" evidence="4">
    <location>
        <begin position="312"/>
        <end position="590"/>
    </location>
</feature>
<feature type="region of interest" description="Disordered" evidence="6">
    <location>
        <begin position="1"/>
        <end position="181"/>
    </location>
</feature>
<feature type="region of interest" description="Disordered" evidence="6">
    <location>
        <begin position="589"/>
        <end position="613"/>
    </location>
</feature>
<feature type="region of interest" description="Disordered" evidence="6">
    <location>
        <begin position="635"/>
        <end position="670"/>
    </location>
</feature>
<feature type="compositionally biased region" description="Low complexity" evidence="6">
    <location>
        <begin position="14"/>
        <end position="31"/>
    </location>
</feature>
<feature type="compositionally biased region" description="Pro residues" evidence="6">
    <location>
        <begin position="32"/>
        <end position="62"/>
    </location>
</feature>
<feature type="compositionally biased region" description="Pro residues" evidence="6">
    <location>
        <begin position="84"/>
        <end position="109"/>
    </location>
</feature>
<feature type="compositionally biased region" description="Low complexity" evidence="6">
    <location>
        <begin position="132"/>
        <end position="141"/>
    </location>
</feature>
<feature type="compositionally biased region" description="Low complexity" evidence="6">
    <location>
        <begin position="167"/>
        <end position="181"/>
    </location>
</feature>
<feature type="compositionally biased region" description="Polar residues" evidence="6">
    <location>
        <begin position="599"/>
        <end position="613"/>
    </location>
</feature>
<feature type="active site" description="Proton acceptor" evidence="4 5">
    <location>
        <position position="436"/>
    </location>
</feature>
<feature type="binding site" evidence="4">
    <location>
        <begin position="318"/>
        <end position="326"/>
    </location>
    <ligand>
        <name>ATP</name>
        <dbReference type="ChEBI" id="CHEBI:30616"/>
    </ligand>
</feature>
<feature type="binding site" evidence="4">
    <location>
        <position position="340"/>
    </location>
    <ligand>
        <name>ATP</name>
        <dbReference type="ChEBI" id="CHEBI:30616"/>
    </ligand>
</feature>
<feature type="modified residue" description="Phosphothreonine" evidence="2">
    <location>
        <position position="301"/>
    </location>
</feature>
<feature type="modified residue" description="Phosphotyrosine" evidence="2">
    <location>
        <position position="385"/>
    </location>
</feature>
<feature type="modified residue" description="Phosphoserine" evidence="2">
    <location>
        <position position="469"/>
    </location>
</feature>
<feature type="modified residue" description="Phosphothreonine" evidence="2">
    <location>
        <position position="470"/>
    </location>
</feature>
<feature type="modified residue" description="Phosphothreonine" evidence="2">
    <location>
        <position position="475"/>
    </location>
</feature>
<feature type="modified residue" description="Phosphotyrosine" evidence="2">
    <location>
        <position position="483"/>
    </location>
</feature>
<feature type="glycosylation site" description="N-linked (GlcNAc...) asparagine" evidence="3">
    <location>
        <position position="22"/>
    </location>
</feature>
<feature type="glycosylation site" description="N-linked (GlcNAc...) asparagine" evidence="3">
    <location>
        <position position="28"/>
    </location>
</feature>
<feature type="glycosylation site" description="N-linked (GlcNAc...) asparagine" evidence="3">
    <location>
        <position position="130"/>
    </location>
</feature>
<feature type="glycosylation site" description="N-linked (GlcNAc...) asparagine" evidence="3">
    <location>
        <position position="151"/>
    </location>
</feature>
<accession>Q8GX23</accession>
<accession>O65672</accession>
<keyword id="KW-0067">ATP-binding</keyword>
<keyword id="KW-1003">Cell membrane</keyword>
<keyword id="KW-0325">Glycoprotein</keyword>
<keyword id="KW-0418">Kinase</keyword>
<keyword id="KW-0472">Membrane</keyword>
<keyword id="KW-0547">Nucleotide-binding</keyword>
<keyword id="KW-0597">Phosphoprotein</keyword>
<keyword id="KW-1185">Reference proteome</keyword>
<keyword id="KW-0723">Serine/threonine-protein kinase</keyword>
<keyword id="KW-0808">Transferase</keyword>
<keyword id="KW-0812">Transmembrane</keyword>
<keyword id="KW-1133">Transmembrane helix</keyword>